<proteinExistence type="inferred from homology"/>
<dbReference type="EC" id="3.6.-.-" evidence="1"/>
<dbReference type="EMBL" id="CP000903">
    <property type="protein sequence ID" value="ABY46420.1"/>
    <property type="molecule type" value="Genomic_DNA"/>
</dbReference>
<dbReference type="RefSeq" id="WP_002034990.1">
    <property type="nucleotide sequence ID" value="NZ_CAKMRX030000123.1"/>
</dbReference>
<dbReference type="SMR" id="A9VTM0"/>
<dbReference type="GeneID" id="66264959"/>
<dbReference type="KEGG" id="bwe:BcerKBAB4_5277"/>
<dbReference type="eggNOG" id="COG0486">
    <property type="taxonomic scope" value="Bacteria"/>
</dbReference>
<dbReference type="HOGENOM" id="CLU_019624_4_1_9"/>
<dbReference type="Proteomes" id="UP000002154">
    <property type="component" value="Chromosome"/>
</dbReference>
<dbReference type="GO" id="GO:0005829">
    <property type="term" value="C:cytosol"/>
    <property type="evidence" value="ECO:0007669"/>
    <property type="project" value="TreeGrafter"/>
</dbReference>
<dbReference type="GO" id="GO:0005525">
    <property type="term" value="F:GTP binding"/>
    <property type="evidence" value="ECO:0007669"/>
    <property type="project" value="UniProtKB-UniRule"/>
</dbReference>
<dbReference type="GO" id="GO:0003924">
    <property type="term" value="F:GTPase activity"/>
    <property type="evidence" value="ECO:0007669"/>
    <property type="project" value="UniProtKB-UniRule"/>
</dbReference>
<dbReference type="GO" id="GO:0046872">
    <property type="term" value="F:metal ion binding"/>
    <property type="evidence" value="ECO:0007669"/>
    <property type="project" value="UniProtKB-KW"/>
</dbReference>
<dbReference type="GO" id="GO:0030488">
    <property type="term" value="P:tRNA methylation"/>
    <property type="evidence" value="ECO:0007669"/>
    <property type="project" value="TreeGrafter"/>
</dbReference>
<dbReference type="GO" id="GO:0002098">
    <property type="term" value="P:tRNA wobble uridine modification"/>
    <property type="evidence" value="ECO:0007669"/>
    <property type="project" value="TreeGrafter"/>
</dbReference>
<dbReference type="CDD" id="cd04164">
    <property type="entry name" value="trmE"/>
    <property type="match status" value="1"/>
</dbReference>
<dbReference type="CDD" id="cd14858">
    <property type="entry name" value="TrmE_N"/>
    <property type="match status" value="1"/>
</dbReference>
<dbReference type="FunFam" id="3.30.1360.120:FF:000003">
    <property type="entry name" value="tRNA modification GTPase MnmE"/>
    <property type="match status" value="1"/>
</dbReference>
<dbReference type="FunFam" id="3.40.50.300:FF:000494">
    <property type="entry name" value="tRNA modification GTPase MnmE"/>
    <property type="match status" value="1"/>
</dbReference>
<dbReference type="Gene3D" id="3.40.50.300">
    <property type="entry name" value="P-loop containing nucleotide triphosphate hydrolases"/>
    <property type="match status" value="1"/>
</dbReference>
<dbReference type="Gene3D" id="3.30.1360.120">
    <property type="entry name" value="Probable tRNA modification gtpase trme, domain 1"/>
    <property type="match status" value="1"/>
</dbReference>
<dbReference type="Gene3D" id="1.20.120.430">
    <property type="entry name" value="tRNA modification GTPase MnmE domain 2"/>
    <property type="match status" value="1"/>
</dbReference>
<dbReference type="HAMAP" id="MF_00379">
    <property type="entry name" value="GTPase_MnmE"/>
    <property type="match status" value="1"/>
</dbReference>
<dbReference type="InterPro" id="IPR031168">
    <property type="entry name" value="G_TrmE"/>
</dbReference>
<dbReference type="InterPro" id="IPR006073">
    <property type="entry name" value="GTP-bd"/>
</dbReference>
<dbReference type="InterPro" id="IPR018948">
    <property type="entry name" value="GTP-bd_TrmE_N"/>
</dbReference>
<dbReference type="InterPro" id="IPR004520">
    <property type="entry name" value="GTPase_MnmE"/>
</dbReference>
<dbReference type="InterPro" id="IPR027368">
    <property type="entry name" value="MnmE_dom2"/>
</dbReference>
<dbReference type="InterPro" id="IPR025867">
    <property type="entry name" value="MnmE_helical"/>
</dbReference>
<dbReference type="InterPro" id="IPR027417">
    <property type="entry name" value="P-loop_NTPase"/>
</dbReference>
<dbReference type="InterPro" id="IPR005225">
    <property type="entry name" value="Small_GTP-bd"/>
</dbReference>
<dbReference type="InterPro" id="IPR027266">
    <property type="entry name" value="TrmE/GcvT_dom1"/>
</dbReference>
<dbReference type="NCBIfam" id="TIGR00450">
    <property type="entry name" value="mnmE_trmE_thdF"/>
    <property type="match status" value="1"/>
</dbReference>
<dbReference type="NCBIfam" id="NF003661">
    <property type="entry name" value="PRK05291.1-3"/>
    <property type="match status" value="1"/>
</dbReference>
<dbReference type="NCBIfam" id="TIGR00231">
    <property type="entry name" value="small_GTP"/>
    <property type="match status" value="1"/>
</dbReference>
<dbReference type="PANTHER" id="PTHR42714">
    <property type="entry name" value="TRNA MODIFICATION GTPASE GTPBP3"/>
    <property type="match status" value="1"/>
</dbReference>
<dbReference type="PANTHER" id="PTHR42714:SF2">
    <property type="entry name" value="TRNA MODIFICATION GTPASE GTPBP3, MITOCHONDRIAL"/>
    <property type="match status" value="1"/>
</dbReference>
<dbReference type="Pfam" id="PF01926">
    <property type="entry name" value="MMR_HSR1"/>
    <property type="match status" value="1"/>
</dbReference>
<dbReference type="Pfam" id="PF12631">
    <property type="entry name" value="MnmE_helical"/>
    <property type="match status" value="1"/>
</dbReference>
<dbReference type="Pfam" id="PF10396">
    <property type="entry name" value="TrmE_N"/>
    <property type="match status" value="1"/>
</dbReference>
<dbReference type="SUPFAM" id="SSF52540">
    <property type="entry name" value="P-loop containing nucleoside triphosphate hydrolases"/>
    <property type="match status" value="1"/>
</dbReference>
<dbReference type="SUPFAM" id="SSF116878">
    <property type="entry name" value="TrmE connector domain"/>
    <property type="match status" value="1"/>
</dbReference>
<dbReference type="PROSITE" id="PS51709">
    <property type="entry name" value="G_TRME"/>
    <property type="match status" value="1"/>
</dbReference>
<organism>
    <name type="scientific">Bacillus mycoides (strain KBAB4)</name>
    <name type="common">Bacillus weihenstephanensis</name>
    <dbReference type="NCBI Taxonomy" id="315730"/>
    <lineage>
        <taxon>Bacteria</taxon>
        <taxon>Bacillati</taxon>
        <taxon>Bacillota</taxon>
        <taxon>Bacilli</taxon>
        <taxon>Bacillales</taxon>
        <taxon>Bacillaceae</taxon>
        <taxon>Bacillus</taxon>
        <taxon>Bacillus cereus group</taxon>
    </lineage>
</organism>
<feature type="chain" id="PRO_0000345714" description="tRNA modification GTPase MnmE">
    <location>
        <begin position="1"/>
        <end position="458"/>
    </location>
</feature>
<feature type="domain" description="TrmE-type G">
    <location>
        <begin position="220"/>
        <end position="379"/>
    </location>
</feature>
<feature type="binding site" evidence="1">
    <location>
        <position position="22"/>
    </location>
    <ligand>
        <name>(6S)-5-formyl-5,6,7,8-tetrahydrofolate</name>
        <dbReference type="ChEBI" id="CHEBI:57457"/>
    </ligand>
</feature>
<feature type="binding site" evidence="1">
    <location>
        <position position="84"/>
    </location>
    <ligand>
        <name>(6S)-5-formyl-5,6,7,8-tetrahydrofolate</name>
        <dbReference type="ChEBI" id="CHEBI:57457"/>
    </ligand>
</feature>
<feature type="binding site" evidence="1">
    <location>
        <position position="123"/>
    </location>
    <ligand>
        <name>(6S)-5-formyl-5,6,7,8-tetrahydrofolate</name>
        <dbReference type="ChEBI" id="CHEBI:57457"/>
    </ligand>
</feature>
<feature type="binding site" evidence="1">
    <location>
        <begin position="230"/>
        <end position="235"/>
    </location>
    <ligand>
        <name>GTP</name>
        <dbReference type="ChEBI" id="CHEBI:37565"/>
    </ligand>
</feature>
<feature type="binding site" evidence="1">
    <location>
        <position position="230"/>
    </location>
    <ligand>
        <name>K(+)</name>
        <dbReference type="ChEBI" id="CHEBI:29103"/>
    </ligand>
</feature>
<feature type="binding site" evidence="1">
    <location>
        <position position="234"/>
    </location>
    <ligand>
        <name>Mg(2+)</name>
        <dbReference type="ChEBI" id="CHEBI:18420"/>
    </ligand>
</feature>
<feature type="binding site" evidence="1">
    <location>
        <begin position="249"/>
        <end position="255"/>
    </location>
    <ligand>
        <name>GTP</name>
        <dbReference type="ChEBI" id="CHEBI:37565"/>
    </ligand>
</feature>
<feature type="binding site" evidence="1">
    <location>
        <position position="249"/>
    </location>
    <ligand>
        <name>K(+)</name>
        <dbReference type="ChEBI" id="CHEBI:29103"/>
    </ligand>
</feature>
<feature type="binding site" evidence="1">
    <location>
        <position position="251"/>
    </location>
    <ligand>
        <name>K(+)</name>
        <dbReference type="ChEBI" id="CHEBI:29103"/>
    </ligand>
</feature>
<feature type="binding site" evidence="1">
    <location>
        <position position="254"/>
    </location>
    <ligand>
        <name>K(+)</name>
        <dbReference type="ChEBI" id="CHEBI:29103"/>
    </ligand>
</feature>
<feature type="binding site" evidence="1">
    <location>
        <position position="255"/>
    </location>
    <ligand>
        <name>Mg(2+)</name>
        <dbReference type="ChEBI" id="CHEBI:18420"/>
    </ligand>
</feature>
<feature type="binding site" evidence="1">
    <location>
        <begin position="274"/>
        <end position="277"/>
    </location>
    <ligand>
        <name>GTP</name>
        <dbReference type="ChEBI" id="CHEBI:37565"/>
    </ligand>
</feature>
<feature type="binding site" evidence="1">
    <location>
        <position position="458"/>
    </location>
    <ligand>
        <name>(6S)-5-formyl-5,6,7,8-tetrahydrofolate</name>
        <dbReference type="ChEBI" id="CHEBI:57457"/>
    </ligand>
</feature>
<evidence type="ECO:0000255" key="1">
    <source>
        <dbReference type="HAMAP-Rule" id="MF_00379"/>
    </source>
</evidence>
<gene>
    <name evidence="1" type="primary">mnmE</name>
    <name evidence="1" type="synonym">trmE</name>
    <name type="ordered locus">BcerKBAB4_5277</name>
</gene>
<sequence>MEFDTIAAISTALGEGAIAIVRVSGDDAIEKVDRIFKGKDLTQVSSHTIHYGHIVDLDTNQVIEEVMVSIMRAPRTFTRENIVEINCHGGLVSVNKVLQLILAQGVRLAEPGEFTKRAFLNGRIDLSQAEAVMDLIRAKTDRAMNVAINQMEGRLSKLIGHLRQEILETLAHIEVNIDYPEYDDVEEMTHNILIEKATHVRAEIAKILETSKQGKILREGISTAIIGRPNVGKSSLLNSLVQEKKAIVTDIAGTTRDVIEEYVNVRGVPLKLIDTAGIRETEDIVERIGVERSKEMMSQADLVLIVVNYSEALTNEDEDLFRAVQGKDFIVIVNKTDLPQEIDMERVTDLAVGNRVITTSLIEEQGIDELEKAIADLFFEGTIDSADMTYVSNARHIGLLTQAGRTINDAIEAIENGVPIDMVQIDLTRAWEILGEITGDTVHESLIDQLFSQFCLGK</sequence>
<comment type="function">
    <text evidence="1">Exhibits a very high intrinsic GTPase hydrolysis rate. Involved in the addition of a carboxymethylaminomethyl (cmnm) group at the wobble position (U34) of certain tRNAs, forming tRNA-cmnm(5)s(2)U34.</text>
</comment>
<comment type="cofactor">
    <cofactor evidence="1">
        <name>K(+)</name>
        <dbReference type="ChEBI" id="CHEBI:29103"/>
    </cofactor>
    <text evidence="1">Binds 1 potassium ion per subunit.</text>
</comment>
<comment type="subunit">
    <text evidence="1">Homodimer. Heterotetramer of two MnmE and two MnmG subunits.</text>
</comment>
<comment type="subcellular location">
    <subcellularLocation>
        <location evidence="1">Cytoplasm</location>
    </subcellularLocation>
</comment>
<comment type="similarity">
    <text evidence="1">Belongs to the TRAFAC class TrmE-Era-EngA-EngB-Septin-like GTPase superfamily. TrmE GTPase family.</text>
</comment>
<accession>A9VTM0</accession>
<reference key="1">
    <citation type="journal article" date="2008" name="Chem. Biol. Interact.">
        <title>Extending the Bacillus cereus group genomics to putative food-borne pathogens of different toxicity.</title>
        <authorList>
            <person name="Lapidus A."/>
            <person name="Goltsman E."/>
            <person name="Auger S."/>
            <person name="Galleron N."/>
            <person name="Segurens B."/>
            <person name="Dossat C."/>
            <person name="Land M.L."/>
            <person name="Broussolle V."/>
            <person name="Brillard J."/>
            <person name="Guinebretiere M.-H."/>
            <person name="Sanchis V."/>
            <person name="Nguen-the C."/>
            <person name="Lereclus D."/>
            <person name="Richardson P."/>
            <person name="Wincker P."/>
            <person name="Weissenbach J."/>
            <person name="Ehrlich S.D."/>
            <person name="Sorokin A."/>
        </authorList>
    </citation>
    <scope>NUCLEOTIDE SEQUENCE [LARGE SCALE GENOMIC DNA]</scope>
    <source>
        <strain>KBAB4</strain>
    </source>
</reference>
<protein>
    <recommendedName>
        <fullName evidence="1">tRNA modification GTPase MnmE</fullName>
        <ecNumber evidence="1">3.6.-.-</ecNumber>
    </recommendedName>
</protein>
<keyword id="KW-0963">Cytoplasm</keyword>
<keyword id="KW-0342">GTP-binding</keyword>
<keyword id="KW-0378">Hydrolase</keyword>
<keyword id="KW-0460">Magnesium</keyword>
<keyword id="KW-0479">Metal-binding</keyword>
<keyword id="KW-0547">Nucleotide-binding</keyword>
<keyword id="KW-0630">Potassium</keyword>
<keyword id="KW-0819">tRNA processing</keyword>
<name>MNME_BACMK</name>